<feature type="chain" id="PRO_1000025015" description="Nicotinate phosphoribosyltransferase">
    <location>
        <begin position="1"/>
        <end position="434"/>
    </location>
</feature>
<feature type="modified residue" description="Phosphohistidine; by autocatalysis" evidence="1">
    <location>
        <position position="242"/>
    </location>
</feature>
<name>PNCB_SINMW</name>
<comment type="function">
    <text evidence="1">Catalyzes the synthesis of beta-nicotinate D-ribonucleotide from nicotinate and 5-phospho-D-ribose 1-phosphate at the expense of ATP.</text>
</comment>
<comment type="catalytic activity">
    <reaction evidence="1">
        <text>nicotinate + 5-phospho-alpha-D-ribose 1-diphosphate + ATP + H2O = nicotinate beta-D-ribonucleotide + ADP + phosphate + diphosphate</text>
        <dbReference type="Rhea" id="RHEA:36163"/>
        <dbReference type="ChEBI" id="CHEBI:15377"/>
        <dbReference type="ChEBI" id="CHEBI:30616"/>
        <dbReference type="ChEBI" id="CHEBI:32544"/>
        <dbReference type="ChEBI" id="CHEBI:33019"/>
        <dbReference type="ChEBI" id="CHEBI:43474"/>
        <dbReference type="ChEBI" id="CHEBI:57502"/>
        <dbReference type="ChEBI" id="CHEBI:58017"/>
        <dbReference type="ChEBI" id="CHEBI:456216"/>
        <dbReference type="EC" id="6.3.4.21"/>
    </reaction>
</comment>
<comment type="pathway">
    <text evidence="1">Cofactor biosynthesis; NAD(+) biosynthesis; nicotinate D-ribonucleotide from nicotinate: step 1/1.</text>
</comment>
<comment type="PTM">
    <text evidence="1">Transiently phosphorylated on a His residue during the reaction cycle. Phosphorylation strongly increases the affinity for substrates and increases the rate of nicotinate D-ribonucleotide production. Dephosphorylation regenerates the low-affinity form of the enzyme, leading to product release.</text>
</comment>
<comment type="similarity">
    <text evidence="1">Belongs to the NAPRTase family.</text>
</comment>
<keyword id="KW-0436">Ligase</keyword>
<keyword id="KW-0597">Phosphoprotein</keyword>
<keyword id="KW-0662">Pyridine nucleotide biosynthesis</keyword>
<accession>A6U5X9</accession>
<gene>
    <name evidence="1" type="primary">pncB</name>
    <name type="ordered locus">Smed_0200</name>
</gene>
<protein>
    <recommendedName>
        <fullName evidence="1">Nicotinate phosphoribosyltransferase</fullName>
        <shortName evidence="1">NAPRTase</shortName>
        <ecNumber evidence="1">6.3.4.21</ecNumber>
    </recommendedName>
</protein>
<dbReference type="EC" id="6.3.4.21" evidence="1"/>
<dbReference type="EMBL" id="CP000738">
    <property type="protein sequence ID" value="ABR59059.1"/>
    <property type="molecule type" value="Genomic_DNA"/>
</dbReference>
<dbReference type="RefSeq" id="WP_011974411.1">
    <property type="nucleotide sequence ID" value="NC_009636.1"/>
</dbReference>
<dbReference type="RefSeq" id="YP_001325894.1">
    <property type="nucleotide sequence ID" value="NC_009636.1"/>
</dbReference>
<dbReference type="SMR" id="A6U5X9"/>
<dbReference type="STRING" id="366394.Smed_0200"/>
<dbReference type="GeneID" id="61613040"/>
<dbReference type="KEGG" id="smd:Smed_0200"/>
<dbReference type="PATRIC" id="fig|366394.8.peg.3263"/>
<dbReference type="eggNOG" id="COG1488">
    <property type="taxonomic scope" value="Bacteria"/>
</dbReference>
<dbReference type="HOGENOM" id="CLU_030991_1_0_5"/>
<dbReference type="OrthoDB" id="9771406at2"/>
<dbReference type="UniPathway" id="UPA00253">
    <property type="reaction ID" value="UER00457"/>
</dbReference>
<dbReference type="Proteomes" id="UP000001108">
    <property type="component" value="Chromosome"/>
</dbReference>
<dbReference type="GO" id="GO:0005829">
    <property type="term" value="C:cytosol"/>
    <property type="evidence" value="ECO:0007669"/>
    <property type="project" value="TreeGrafter"/>
</dbReference>
<dbReference type="GO" id="GO:0004516">
    <property type="term" value="F:nicotinate phosphoribosyltransferase activity"/>
    <property type="evidence" value="ECO:0007669"/>
    <property type="project" value="UniProtKB-UniRule"/>
</dbReference>
<dbReference type="GO" id="GO:0034355">
    <property type="term" value="P:NAD biosynthetic process via the salvage pathway"/>
    <property type="evidence" value="ECO:0007669"/>
    <property type="project" value="TreeGrafter"/>
</dbReference>
<dbReference type="Gene3D" id="3.20.140.10">
    <property type="entry name" value="nicotinate phosphoribosyltransferase"/>
    <property type="match status" value="1"/>
</dbReference>
<dbReference type="HAMAP" id="MF_00570">
    <property type="entry name" value="NAPRTase"/>
    <property type="match status" value="1"/>
</dbReference>
<dbReference type="InterPro" id="IPR041525">
    <property type="entry name" value="N/Namide_PRibTrfase"/>
</dbReference>
<dbReference type="InterPro" id="IPR040727">
    <property type="entry name" value="NAPRTase_N"/>
</dbReference>
<dbReference type="InterPro" id="IPR006406">
    <property type="entry name" value="Nic_PRibTrfase"/>
</dbReference>
<dbReference type="InterPro" id="IPR007229">
    <property type="entry name" value="Nic_PRibTrfase-Fam"/>
</dbReference>
<dbReference type="InterPro" id="IPR036068">
    <property type="entry name" value="Nicotinate_pribotase-like_C"/>
</dbReference>
<dbReference type="NCBIfam" id="TIGR01514">
    <property type="entry name" value="NAPRTase"/>
    <property type="match status" value="1"/>
</dbReference>
<dbReference type="NCBIfam" id="NF003704">
    <property type="entry name" value="PRK05321.1"/>
    <property type="match status" value="1"/>
</dbReference>
<dbReference type="PANTHER" id="PTHR11098">
    <property type="entry name" value="NICOTINATE PHOSPHORIBOSYLTRANSFERASE"/>
    <property type="match status" value="1"/>
</dbReference>
<dbReference type="PANTHER" id="PTHR11098:SF1">
    <property type="entry name" value="NICOTINATE PHOSPHORIBOSYLTRANSFERASE"/>
    <property type="match status" value="1"/>
</dbReference>
<dbReference type="Pfam" id="PF04095">
    <property type="entry name" value="NAPRTase"/>
    <property type="match status" value="1"/>
</dbReference>
<dbReference type="Pfam" id="PF17767">
    <property type="entry name" value="NAPRTase_N"/>
    <property type="match status" value="1"/>
</dbReference>
<dbReference type="PIRSF" id="PIRSF000484">
    <property type="entry name" value="NAPRT"/>
    <property type="match status" value="1"/>
</dbReference>
<dbReference type="SUPFAM" id="SSF51690">
    <property type="entry name" value="Nicotinate/Quinolinate PRTase C-terminal domain-like"/>
    <property type="match status" value="1"/>
</dbReference>
<dbReference type="SUPFAM" id="SSF54675">
    <property type="entry name" value="Nicotinate/Quinolinate PRTase N-terminal domain-like"/>
    <property type="match status" value="1"/>
</dbReference>
<organism>
    <name type="scientific">Sinorhizobium medicae (strain WSM419)</name>
    <name type="common">Ensifer medicae</name>
    <dbReference type="NCBI Taxonomy" id="366394"/>
    <lineage>
        <taxon>Bacteria</taxon>
        <taxon>Pseudomonadati</taxon>
        <taxon>Pseudomonadota</taxon>
        <taxon>Alphaproteobacteria</taxon>
        <taxon>Hyphomicrobiales</taxon>
        <taxon>Rhizobiaceae</taxon>
        <taxon>Sinorhizobium/Ensifer group</taxon>
        <taxon>Sinorhizobium</taxon>
    </lineage>
</organism>
<reference key="1">
    <citation type="submission" date="2007-06" db="EMBL/GenBank/DDBJ databases">
        <title>Complete sequence of Sinorhizobium medicae WSM419 chromosome.</title>
        <authorList>
            <consortium name="US DOE Joint Genome Institute"/>
            <person name="Copeland A."/>
            <person name="Lucas S."/>
            <person name="Lapidus A."/>
            <person name="Barry K."/>
            <person name="Glavina del Rio T."/>
            <person name="Dalin E."/>
            <person name="Tice H."/>
            <person name="Pitluck S."/>
            <person name="Chain P."/>
            <person name="Malfatti S."/>
            <person name="Shin M."/>
            <person name="Vergez L."/>
            <person name="Schmutz J."/>
            <person name="Larimer F."/>
            <person name="Land M."/>
            <person name="Hauser L."/>
            <person name="Kyrpides N."/>
            <person name="Mikhailova N."/>
            <person name="Reeve W.G."/>
            <person name="Richardson P."/>
        </authorList>
    </citation>
    <scope>NUCLEOTIDE SEQUENCE [LARGE SCALE GENOMIC DNA]</scope>
    <source>
        <strain>WSM419</strain>
    </source>
</reference>
<sequence length="434" mass="49701">MPKTDIARRVYNHTWKLDPIIRSLLDTDFYKLLMLQMIWQLYPDVDATFSLINRTKTVRLADEIDEQELRDQLDHARGLRFTKKEMIWLAGNSFYGRKQIFAPEFLVWLAKFRLPPYELSRRDGQFELTFRGRWAETTMWEIPALAIINELRSRAAMKGLGPFTLDVLYARAKARMWLKVEQLREHPNLRISDFGTRRRHSFLWQRWCVEALKEGIGPSFTGSSNVLLAMDNDLEAVGTNAHELPMVAAALARNDRELAAAPYKVLQDWNQLYGGNLLIVLPDAFGTAAFLRDAPDWVADWTGFRPDSAPPIEGGEKIIAWWKKMGRDPREKLLIFSDGLDVDTIVKTYCHFEGRVRMSFGWGTNLTNDFAGCAPTEINGLNPISVVCKVSEANGHPAVKLSDNPRKATGDPGEVERYLRFFGSEDFVEQSVRV</sequence>
<evidence type="ECO:0000255" key="1">
    <source>
        <dbReference type="HAMAP-Rule" id="MF_00570"/>
    </source>
</evidence>
<proteinExistence type="inferred from homology"/>